<dbReference type="EMBL" id="AAFI02000011">
    <property type="protein sequence ID" value="EAL70598.1"/>
    <property type="molecule type" value="Genomic_DNA"/>
</dbReference>
<dbReference type="EMBL" id="AAFI02000009">
    <property type="protein sequence ID" value="EAL70765.1"/>
    <property type="molecule type" value="Genomic_DNA"/>
</dbReference>
<dbReference type="RefSeq" id="XP_644524.1">
    <property type="nucleotide sequence ID" value="XM_639432.1"/>
</dbReference>
<dbReference type="RefSeq" id="XP_644726.1">
    <property type="nucleotide sequence ID" value="XM_639634.1"/>
</dbReference>
<dbReference type="SMR" id="Q556U5"/>
<dbReference type="FunCoup" id="Q556U5">
    <property type="interactions" value="12"/>
</dbReference>
<dbReference type="STRING" id="44689.Q556U5"/>
<dbReference type="PaxDb" id="44689-DDB0168066"/>
<dbReference type="EnsemblProtists" id="EAL70598">
    <property type="protein sequence ID" value="EAL70598"/>
    <property type="gene ID" value="DDB_G0273815"/>
</dbReference>
<dbReference type="EnsemblProtists" id="EAL70765">
    <property type="protein sequence ID" value="EAL70765"/>
    <property type="gene ID" value="DDB_G0273095"/>
</dbReference>
<dbReference type="GeneID" id="8618826"/>
<dbReference type="GeneID" id="8619150"/>
<dbReference type="KEGG" id="ddi:DDB_G0273095"/>
<dbReference type="KEGG" id="ddi:DDB_G0273815"/>
<dbReference type="dictyBase" id="DDB_G0273095"/>
<dbReference type="dictyBase" id="DDB_G0273815"/>
<dbReference type="VEuPathDB" id="AmoebaDB:DDB_G0273815"/>
<dbReference type="eggNOG" id="KOG3375">
    <property type="taxonomic scope" value="Eukaryota"/>
</dbReference>
<dbReference type="HOGENOM" id="CLU_1323019_0_0_1"/>
<dbReference type="InParanoid" id="Q556U5"/>
<dbReference type="OMA" id="NQMGLWR"/>
<dbReference type="Reactome" id="R-DDI-6798695">
    <property type="pathway name" value="Neutrophil degranulation"/>
</dbReference>
<dbReference type="PRO" id="PR:Q556U5"/>
<dbReference type="Proteomes" id="UP000002195">
    <property type="component" value="Chromosome 2"/>
</dbReference>
<dbReference type="GO" id="GO:0005829">
    <property type="term" value="C:cytosol"/>
    <property type="evidence" value="ECO:0000318"/>
    <property type="project" value="GO_Central"/>
</dbReference>
<dbReference type="InterPro" id="IPR019380">
    <property type="entry name" value="Casein_kinase_sb_PP28"/>
</dbReference>
<dbReference type="InterPro" id="IPR039876">
    <property type="entry name" value="HAP28"/>
</dbReference>
<dbReference type="PANTHER" id="PTHR22055">
    <property type="entry name" value="28 KDA HEAT- AND ACID-STABLE PHOSPHOPROTEIN PDGF-ASSOCIATED PROTEIN"/>
    <property type="match status" value="1"/>
</dbReference>
<dbReference type="Pfam" id="PF10252">
    <property type="entry name" value="PP28"/>
    <property type="match status" value="1"/>
</dbReference>
<organism>
    <name type="scientific">Dictyostelium discoideum</name>
    <name type="common">Social amoeba</name>
    <dbReference type="NCBI Taxonomy" id="44689"/>
    <lineage>
        <taxon>Eukaryota</taxon>
        <taxon>Amoebozoa</taxon>
        <taxon>Evosea</taxon>
        <taxon>Eumycetozoa</taxon>
        <taxon>Dictyostelia</taxon>
        <taxon>Dictyosteliales</taxon>
        <taxon>Dictyosteliaceae</taxon>
        <taxon>Dictyostelium</taxon>
    </lineage>
</organism>
<protein>
    <recommendedName>
        <fullName>28 kDa heat- and acid-stable phosphoprotein homolog</fullName>
    </recommendedName>
</protein>
<reference key="1">
    <citation type="journal article" date="2002" name="Nature">
        <title>Sequence and analysis of chromosome 2 of Dictyostelium discoideum.</title>
        <authorList>
            <person name="Gloeckner G."/>
            <person name="Eichinger L."/>
            <person name="Szafranski K."/>
            <person name="Pachebat J.A."/>
            <person name="Bankier A.T."/>
            <person name="Dear P.H."/>
            <person name="Lehmann R."/>
            <person name="Baumgart C."/>
            <person name="Parra G."/>
            <person name="Abril J.F."/>
            <person name="Guigo R."/>
            <person name="Kumpf K."/>
            <person name="Tunggal B."/>
            <person name="Cox E.C."/>
            <person name="Quail M.A."/>
            <person name="Platzer M."/>
            <person name="Rosenthal A."/>
            <person name="Noegel A.A."/>
        </authorList>
    </citation>
    <scope>NUCLEOTIDE SEQUENCE [LARGE SCALE GENOMIC DNA]</scope>
    <source>
        <strain>AX4</strain>
    </source>
</reference>
<reference key="2">
    <citation type="journal article" date="2005" name="Nature">
        <title>The genome of the social amoeba Dictyostelium discoideum.</title>
        <authorList>
            <person name="Eichinger L."/>
            <person name="Pachebat J.A."/>
            <person name="Gloeckner G."/>
            <person name="Rajandream M.A."/>
            <person name="Sucgang R."/>
            <person name="Berriman M."/>
            <person name="Song J."/>
            <person name="Olsen R."/>
            <person name="Szafranski K."/>
            <person name="Xu Q."/>
            <person name="Tunggal B."/>
            <person name="Kummerfeld S."/>
            <person name="Madera M."/>
            <person name="Konfortov B.A."/>
            <person name="Rivero F."/>
            <person name="Bankier A.T."/>
            <person name="Lehmann R."/>
            <person name="Hamlin N."/>
            <person name="Davies R."/>
            <person name="Gaudet P."/>
            <person name="Fey P."/>
            <person name="Pilcher K."/>
            <person name="Chen G."/>
            <person name="Saunders D."/>
            <person name="Sodergren E.J."/>
            <person name="Davis P."/>
            <person name="Kerhornou A."/>
            <person name="Nie X."/>
            <person name="Hall N."/>
            <person name="Anjard C."/>
            <person name="Hemphill L."/>
            <person name="Bason N."/>
            <person name="Farbrother P."/>
            <person name="Desany B."/>
            <person name="Just E."/>
            <person name="Morio T."/>
            <person name="Rost R."/>
            <person name="Churcher C.M."/>
            <person name="Cooper J."/>
            <person name="Haydock S."/>
            <person name="van Driessche N."/>
            <person name="Cronin A."/>
            <person name="Goodhead I."/>
            <person name="Muzny D.M."/>
            <person name="Mourier T."/>
            <person name="Pain A."/>
            <person name="Lu M."/>
            <person name="Harper D."/>
            <person name="Lindsay R."/>
            <person name="Hauser H."/>
            <person name="James K.D."/>
            <person name="Quiles M."/>
            <person name="Madan Babu M."/>
            <person name="Saito T."/>
            <person name="Buchrieser C."/>
            <person name="Wardroper A."/>
            <person name="Felder M."/>
            <person name="Thangavelu M."/>
            <person name="Johnson D."/>
            <person name="Knights A."/>
            <person name="Loulseged H."/>
            <person name="Mungall K.L."/>
            <person name="Oliver K."/>
            <person name="Price C."/>
            <person name="Quail M.A."/>
            <person name="Urushihara H."/>
            <person name="Hernandez J."/>
            <person name="Rabbinowitsch E."/>
            <person name="Steffen D."/>
            <person name="Sanders M."/>
            <person name="Ma J."/>
            <person name="Kohara Y."/>
            <person name="Sharp S."/>
            <person name="Simmonds M.N."/>
            <person name="Spiegler S."/>
            <person name="Tivey A."/>
            <person name="Sugano S."/>
            <person name="White B."/>
            <person name="Walker D."/>
            <person name="Woodward J.R."/>
            <person name="Winckler T."/>
            <person name="Tanaka Y."/>
            <person name="Shaulsky G."/>
            <person name="Schleicher M."/>
            <person name="Weinstock G.M."/>
            <person name="Rosenthal A."/>
            <person name="Cox E.C."/>
            <person name="Chisholm R.L."/>
            <person name="Gibbs R.A."/>
            <person name="Loomis W.F."/>
            <person name="Platzer M."/>
            <person name="Kay R.R."/>
            <person name="Williams J.G."/>
            <person name="Dear P.H."/>
            <person name="Noegel A.A."/>
            <person name="Barrell B.G."/>
            <person name="Kuspa A."/>
        </authorList>
    </citation>
    <scope>NUCLEOTIDE SEQUENCE [LARGE SCALE GENOMIC DNA]</scope>
    <source>
        <strain>AX4</strain>
    </source>
</reference>
<gene>
    <name type="ORF">DDB_G0273095</name>
</gene>
<gene>
    <name type="ORF">DDB_G0273815</name>
</gene>
<comment type="similarity">
    <text evidence="3">Belongs to the PDAP1 family.</text>
</comment>
<comment type="caution">
    <text evidence="3">The gene for this protein is duplicated in strains AX3 and AX4. These strains contain a duplication of a segment of 750 kb of chromosome 2 compared to the corresponding sequence in strain AX2.</text>
</comment>
<name>HAP28_DICDI</name>
<keyword id="KW-0175">Coiled coil</keyword>
<keyword id="KW-1185">Reference proteome</keyword>
<feature type="chain" id="PRO_0000347062" description="28 kDa heat- and acid-stable phosphoprotein homolog">
    <location>
        <begin position="1"/>
        <end position="208"/>
    </location>
</feature>
<feature type="region of interest" description="Disordered" evidence="2">
    <location>
        <begin position="1"/>
        <end position="133"/>
    </location>
</feature>
<feature type="region of interest" description="Disordered" evidence="2">
    <location>
        <begin position="145"/>
        <end position="208"/>
    </location>
</feature>
<feature type="coiled-coil region" evidence="1">
    <location>
        <begin position="137"/>
        <end position="206"/>
    </location>
</feature>
<feature type="compositionally biased region" description="Basic and acidic residues" evidence="2">
    <location>
        <begin position="16"/>
        <end position="44"/>
    </location>
</feature>
<feature type="compositionally biased region" description="Low complexity" evidence="2">
    <location>
        <begin position="52"/>
        <end position="69"/>
    </location>
</feature>
<feature type="compositionally biased region" description="Low complexity" evidence="2">
    <location>
        <begin position="84"/>
        <end position="100"/>
    </location>
</feature>
<feature type="compositionally biased region" description="Acidic residues" evidence="2">
    <location>
        <begin position="105"/>
        <end position="121"/>
    </location>
</feature>
<feature type="compositionally biased region" description="Basic and acidic residues" evidence="2">
    <location>
        <begin position="145"/>
        <end position="154"/>
    </location>
</feature>
<feature type="compositionally biased region" description="Basic and acidic residues" evidence="2">
    <location>
        <begin position="162"/>
        <end position="208"/>
    </location>
</feature>
<proteinExistence type="inferred from homology"/>
<evidence type="ECO:0000255" key="1"/>
<evidence type="ECO:0000256" key="2">
    <source>
        <dbReference type="SAM" id="MobiDB-lite"/>
    </source>
</evidence>
<evidence type="ECO:0000305" key="3"/>
<sequence>MAGGKRGGKVAPTKTFGRDYERSKGKISRDRVYDEEDIIKRNQESDSDDNSGSESGSENETKNNNNKSKLGSDSSDDEPVIVSRNPNAKKPAAKRPPTTKKQQESDSEDDSDKESDSEDEIANPNRMKQVTKKLSEINVNAKVELSRREKEELARQAATQRQNEKQQKSDLERLQVIRKQREEAAKRKEEEKKANEEKMAERRRLGLA</sequence>
<accession>Q556U5</accession>
<accession>Q86JV9</accession>